<comment type="function">
    <text evidence="2">Plays an essential role in viral RNA transcription and replication by forming the heterotrimeric polymerase complex together with PB1 and PB2 subunits. The complex transcribes viral mRNAs by using a unique mechanism called cap-snatching. It consists in the hijacking and cleavage of host capped pre-mRNAs. These short capped RNAs are then used as primers for viral mRNAs. The PB2 subunit is responsible for the binding of the 5' cap of cellular pre-mRNAs which are subsequently cleaved after 10-13 nucleotides by the PA subunit that carries the endonuclease activity.</text>
</comment>
<comment type="cofactor">
    <cofactor evidence="2">
        <name>Mn(2+)</name>
        <dbReference type="ChEBI" id="CHEBI:29035"/>
    </cofactor>
    <text evidence="2">Binds 2 manganese ions per subunit.</text>
</comment>
<comment type="subunit">
    <text evidence="1 2">Influenza RNA polymerase is composed of three subunits: PB1, PB2 and PA. Interacts (via C-terminus) with PB1 (via N-terminus).</text>
</comment>
<comment type="subcellular location">
    <subcellularLocation>
        <location evidence="2">Host cytoplasm</location>
    </subcellularLocation>
    <subcellularLocation>
        <location evidence="2">Host nucleus</location>
    </subcellularLocation>
    <text evidence="1 2">PB1 and PA are transported in the host nucleus as a complex.</text>
</comment>
<comment type="alternative products">
    <event type="ribosomal frameshifting"/>
    <isoform>
        <id>Q6DNX7-1</id>
        <name>PA</name>
        <sequence type="displayed"/>
    </isoform>
    <isoform>
        <id>P0DJU5-1</id>
        <name>PA-X</name>
        <sequence type="external"/>
    </isoform>
</comment>
<comment type="PTM">
    <text evidence="1 2">Phosphorylated on serines and threonines by host kinases, including human casein kinase II.</text>
</comment>
<comment type="similarity">
    <text evidence="2">Belongs to the influenza viruses PA family.</text>
</comment>
<organismHost>
    <name type="scientific">Aves</name>
    <dbReference type="NCBI Taxonomy" id="8782"/>
</organismHost>
<organismHost>
    <name type="scientific">Felis catus</name>
    <name type="common">Cat</name>
    <name type="synonym">Felis silvestris catus</name>
    <dbReference type="NCBI Taxonomy" id="9685"/>
</organismHost>
<organismHost>
    <name type="scientific">Homo sapiens</name>
    <name type="common">Human</name>
    <dbReference type="NCBI Taxonomy" id="9606"/>
</organismHost>
<organismHost>
    <name type="scientific">Panthera pardus</name>
    <name type="common">Leopard</name>
    <name type="synonym">Felis pardus</name>
    <dbReference type="NCBI Taxonomy" id="9691"/>
</organismHost>
<organismHost>
    <name type="scientific">Panthera tigris</name>
    <name type="common">Tiger</name>
    <dbReference type="NCBI Taxonomy" id="9694"/>
</organismHost>
<organismHost>
    <name type="scientific">Sus scrofa</name>
    <name type="common">Pig</name>
    <dbReference type="NCBI Taxonomy" id="9823"/>
</organismHost>
<dbReference type="EC" id="3.1.-.-" evidence="2"/>
<dbReference type="EMBL" id="AY651625">
    <property type="protein sequence ID" value="AAT74501.1"/>
    <property type="molecule type" value="Genomic_RNA"/>
</dbReference>
<dbReference type="SMR" id="Q6DNX7"/>
<dbReference type="MEROPS" id="S62.001"/>
<dbReference type="GO" id="GO:0030430">
    <property type="term" value="C:host cell cytoplasm"/>
    <property type="evidence" value="ECO:0007669"/>
    <property type="project" value="UniProtKB-SubCell"/>
</dbReference>
<dbReference type="GO" id="GO:0042025">
    <property type="term" value="C:host cell nucleus"/>
    <property type="evidence" value="ECO:0007669"/>
    <property type="project" value="UniProtKB-SubCell"/>
</dbReference>
<dbReference type="GO" id="GO:0004519">
    <property type="term" value="F:endonuclease activity"/>
    <property type="evidence" value="ECO:0007669"/>
    <property type="project" value="UniProtKB-KW"/>
</dbReference>
<dbReference type="GO" id="GO:0046872">
    <property type="term" value="F:metal ion binding"/>
    <property type="evidence" value="ECO:0007669"/>
    <property type="project" value="UniProtKB-KW"/>
</dbReference>
<dbReference type="GO" id="GO:0003723">
    <property type="term" value="F:RNA binding"/>
    <property type="evidence" value="ECO:0007669"/>
    <property type="project" value="UniProtKB-UniRule"/>
</dbReference>
<dbReference type="GO" id="GO:0075526">
    <property type="term" value="P:cap snatching"/>
    <property type="evidence" value="ECO:0007669"/>
    <property type="project" value="UniProtKB-UniRule"/>
</dbReference>
<dbReference type="GO" id="GO:0006351">
    <property type="term" value="P:DNA-templated transcription"/>
    <property type="evidence" value="ECO:0007669"/>
    <property type="project" value="UniProtKB-UniRule"/>
</dbReference>
<dbReference type="GO" id="GO:0039657">
    <property type="term" value="P:symbiont-mediated suppression of host gene expression"/>
    <property type="evidence" value="ECO:0007669"/>
    <property type="project" value="UniProtKB-KW"/>
</dbReference>
<dbReference type="GO" id="GO:0039523">
    <property type="term" value="P:symbiont-mediated suppression of host mRNA transcription via inhibition of RNA polymerase II activity"/>
    <property type="evidence" value="ECO:0007669"/>
    <property type="project" value="UniProtKB-UniRule"/>
</dbReference>
<dbReference type="GO" id="GO:0039694">
    <property type="term" value="P:viral RNA genome replication"/>
    <property type="evidence" value="ECO:0007669"/>
    <property type="project" value="InterPro"/>
</dbReference>
<dbReference type="GO" id="GO:0075523">
    <property type="term" value="P:viral translational frameshifting"/>
    <property type="evidence" value="ECO:0007669"/>
    <property type="project" value="UniProtKB-KW"/>
</dbReference>
<dbReference type="FunFam" id="3.40.91.90:FF:000001">
    <property type="entry name" value="Polymerase acidic protein"/>
    <property type="match status" value="1"/>
</dbReference>
<dbReference type="Gene3D" id="3.40.91.90">
    <property type="entry name" value="Influenza RNA-dependent RNA polymerase subunit PA, endonuclease domain"/>
    <property type="match status" value="1"/>
</dbReference>
<dbReference type="HAMAP" id="MF_04063">
    <property type="entry name" value="INFV_PA"/>
    <property type="match status" value="1"/>
</dbReference>
<dbReference type="InterPro" id="IPR037534">
    <property type="entry name" value="INFV_PA"/>
</dbReference>
<dbReference type="InterPro" id="IPR001009">
    <property type="entry name" value="PA/PA-X"/>
</dbReference>
<dbReference type="InterPro" id="IPR038372">
    <property type="entry name" value="PA/PA-X_sf"/>
</dbReference>
<dbReference type="Pfam" id="PF00603">
    <property type="entry name" value="Flu_PA"/>
    <property type="match status" value="1"/>
</dbReference>
<reference key="1">
    <citation type="journal article" date="2004" name="Nature">
        <title>Genesis of a highly pathogenic and potentially pandemic H5N1 influenza virus in eastern Asia.</title>
        <authorList>
            <person name="Li K.S."/>
            <person name="Guan Y."/>
            <person name="Wang J."/>
            <person name="Smith G.J.D."/>
            <person name="Xu K.M."/>
            <person name="Duan L."/>
            <person name="Rahardjo A.P."/>
            <person name="Puthavathana P."/>
            <person name="Buranathai C."/>
            <person name="Nguyen T.D."/>
            <person name="Estoepangestie A.T.S."/>
            <person name="Chaisingh A."/>
            <person name="Auewarakul P."/>
            <person name="Long H.T."/>
            <person name="Hanh N.T.H."/>
            <person name="Webby R.J."/>
            <person name="Poon L.L.M."/>
            <person name="Chen H."/>
            <person name="Shortridge K.F."/>
            <person name="Yuen K.Y."/>
            <person name="Webster R.G."/>
            <person name="Peiris J.S.M."/>
        </authorList>
    </citation>
    <scope>NUCLEOTIDE SEQUENCE [GENOMIC RNA]</scope>
</reference>
<feature type="chain" id="PRO_0000311136" description="Polymerase acidic protein">
    <location>
        <begin position="1"/>
        <end position="716"/>
    </location>
</feature>
<feature type="short sequence motif" description="Nuclear localization signal 1 (NLS1)" evidence="1 2">
    <location>
        <begin position="124"/>
        <end position="139"/>
    </location>
</feature>
<feature type="short sequence motif" description="Nuclear localization signal 2 (NLS2)" evidence="1 2">
    <location>
        <begin position="184"/>
        <end position="247"/>
    </location>
</feature>
<feature type="binding site" evidence="2">
    <location>
        <position position="41"/>
    </location>
    <ligand>
        <name>Mn(2+)</name>
        <dbReference type="ChEBI" id="CHEBI:29035"/>
        <label>1</label>
    </ligand>
</feature>
<feature type="binding site" evidence="2">
    <location>
        <position position="80"/>
    </location>
    <ligand>
        <name>Mn(2+)</name>
        <dbReference type="ChEBI" id="CHEBI:29035"/>
        <label>2</label>
    </ligand>
</feature>
<feature type="binding site" evidence="2">
    <location>
        <position position="108"/>
    </location>
    <ligand>
        <name>Mn(2+)</name>
        <dbReference type="ChEBI" id="CHEBI:29035"/>
        <label>1</label>
    </ligand>
</feature>
<feature type="binding site" evidence="2">
    <location>
        <position position="108"/>
    </location>
    <ligand>
        <name>Mn(2+)</name>
        <dbReference type="ChEBI" id="CHEBI:29035"/>
        <label>2</label>
    </ligand>
</feature>
<feature type="binding site" evidence="2">
    <location>
        <position position="119"/>
    </location>
    <ligand>
        <name>Mn(2+)</name>
        <dbReference type="ChEBI" id="CHEBI:29035"/>
        <label>1</label>
    </ligand>
</feature>
<feature type="binding site" evidence="2">
    <location>
        <position position="120"/>
    </location>
    <ligand>
        <name>Mn(2+)</name>
        <dbReference type="ChEBI" id="CHEBI:29035"/>
        <label>1</label>
    </ligand>
</feature>
<keyword id="KW-1157">Cap snatching</keyword>
<keyword id="KW-0255">Endonuclease</keyword>
<keyword id="KW-1262">Eukaryotic host gene expression shutoff by virus</keyword>
<keyword id="KW-1191">Eukaryotic host transcription shutoff by virus</keyword>
<keyword id="KW-1035">Host cytoplasm</keyword>
<keyword id="KW-1190">Host gene expression shutoff by virus</keyword>
<keyword id="KW-1048">Host nucleus</keyword>
<keyword id="KW-0945">Host-virus interaction</keyword>
<keyword id="KW-0378">Hydrolase</keyword>
<keyword id="KW-1104">Inhibition of host RNA polymerase II by virus</keyword>
<keyword id="KW-0464">Manganese</keyword>
<keyword id="KW-0479">Metal-binding</keyword>
<keyword id="KW-0540">Nuclease</keyword>
<keyword id="KW-0597">Phosphoprotein</keyword>
<keyword id="KW-0688">Ribosomal frameshifting</keyword>
<proteinExistence type="inferred from homology"/>
<name>PA_I02A4</name>
<accession>Q6DNX7</accession>
<protein>
    <recommendedName>
        <fullName evidence="2">Polymerase acidic protein</fullName>
        <ecNumber evidence="2">3.1.-.-</ecNumber>
    </recommendedName>
    <alternativeName>
        <fullName evidence="2">RNA-directed RNA polymerase subunit P2</fullName>
    </alternativeName>
</protein>
<organism>
    <name type="scientific">Influenza A virus (strain A/Silky Chicken/Hong Kong/YU100/2002 H5N1 genotype X3)</name>
    <dbReference type="NCBI Taxonomy" id="284214"/>
    <lineage>
        <taxon>Viruses</taxon>
        <taxon>Riboviria</taxon>
        <taxon>Orthornavirae</taxon>
        <taxon>Negarnaviricota</taxon>
        <taxon>Polyploviricotina</taxon>
        <taxon>Insthoviricetes</taxon>
        <taxon>Articulavirales</taxon>
        <taxon>Orthomyxoviridae</taxon>
        <taxon>Alphainfluenzavirus</taxon>
        <taxon>Alphainfluenzavirus influenzae</taxon>
        <taxon>Influenza A virus</taxon>
    </lineage>
</organism>
<gene>
    <name evidence="2" type="primary">PA</name>
</gene>
<evidence type="ECO:0000250" key="1">
    <source>
        <dbReference type="UniProtKB" id="P03433"/>
    </source>
</evidence>
<evidence type="ECO:0000255" key="2">
    <source>
        <dbReference type="HAMAP-Rule" id="MF_04063"/>
    </source>
</evidence>
<sequence>MEDFVRQCFNPMIVELAEKAMKEYGEDPKIETNKFAAICTHLEVCFMYSDFHFIDERGESIIVESGDPNALLKHRFEIIEGRDRTMAWTVVNSICNTTGVEKPKFLPDLYDYKENRFIEIGVTRREVHIYYLEKANKIKSEKTHIHIFSFTGEEMATKSDYTLDEESRARIKTRLFTIRQEMASRGLWDSFRQSERGEETIEERFEITGTMRRLADQSLPPNFSSLENFRAYVDGFEPNGCIEGKLSQMSKEVNARIEPFLKTTPRPLRLPDGPPCSQRSKFLLMDALKLSIEDPSHEGEGIPLYDAIKCMKTFFGWKEPNIVKPHEKGINPNYLLAWKQVLAELQDIENEEKIPKTKNMKKTGQLKWALGENMAPEKVDFEDCKDVSDLRQYDSDEPESRSLASWIQSEFNKACELTDSSWIELDEIGEDVAPIEHIASMRRNYFTAEVSHCRATEYIMKGVYINTALLNASCAAMDDFQLIPMISKCRTKEGRRKTNLYGFIIKGRSHLRNDTDVVNFVSMEFSLTDPRLEPHKWEKYCVLEIGDMLLRTAVGQVSRPMFLYVRTNGTSKIKMKWGMEMRRCLLQSLQQIESMIEAESSVKEKDMTKEFFENKSETWPIGESPKGVEEGSIGKVCRTLLAKSVFNSLYASPQLEGFSAESRKLLLIVQALRDNLEPGTFDLGGLYEAIEECLINDPWVLLNASWFNSFLTHALK</sequence>